<evidence type="ECO:0000255" key="1">
    <source>
        <dbReference type="HAMAP-Rule" id="MF_00766"/>
    </source>
</evidence>
<sequence length="241" mass="27076">MISVRRGLSQLWYWGKRGVIGIIALWMAGILIFAFLPVPFSMVMIERQLGAWLTGDFAYVAHSDWVPMDEISPYMALAVMAAEDQKFPDHWGFDVGAIESALSHNQRNQKRIRGASTLSQQTAKNVFLWDGRSWIRKGLEVGLTAGIELIWTKRRILTVYLNIAEFGNGIFGVEAAARHFFNKPASKLSASEAALLAAVLPNPLRFKVNAPSGYVISRQQWILRQMHQLGGKTFLQENTLD</sequence>
<reference key="1">
    <citation type="submission" date="2008-02" db="EMBL/GenBank/DDBJ databases">
        <title>Complete sequence of Yersinia pseudotuberculosis YPIII.</title>
        <authorList>
            <consortium name="US DOE Joint Genome Institute"/>
            <person name="Copeland A."/>
            <person name="Lucas S."/>
            <person name="Lapidus A."/>
            <person name="Glavina del Rio T."/>
            <person name="Dalin E."/>
            <person name="Tice H."/>
            <person name="Bruce D."/>
            <person name="Goodwin L."/>
            <person name="Pitluck S."/>
            <person name="Munk A.C."/>
            <person name="Brettin T."/>
            <person name="Detter J.C."/>
            <person name="Han C."/>
            <person name="Tapia R."/>
            <person name="Schmutz J."/>
            <person name="Larimer F."/>
            <person name="Land M."/>
            <person name="Hauser L."/>
            <person name="Challacombe J.F."/>
            <person name="Green L."/>
            <person name="Lindler L.E."/>
            <person name="Nikolich M.P."/>
            <person name="Richardson P."/>
        </authorList>
    </citation>
    <scope>NUCLEOTIDE SEQUENCE [LARGE SCALE GENOMIC DNA]</scope>
    <source>
        <strain>YPIII</strain>
    </source>
</reference>
<proteinExistence type="inferred from homology"/>
<gene>
    <name evidence="1" type="primary">mtgA</name>
    <name type="ordered locus">YPK_0535</name>
</gene>
<feature type="chain" id="PRO_1000133617" description="Biosynthetic peptidoglycan transglycosylase">
    <location>
        <begin position="1"/>
        <end position="241"/>
    </location>
</feature>
<feature type="transmembrane region" description="Helical" evidence="1">
    <location>
        <begin position="18"/>
        <end position="38"/>
    </location>
</feature>
<keyword id="KW-0997">Cell inner membrane</keyword>
<keyword id="KW-1003">Cell membrane</keyword>
<keyword id="KW-0133">Cell shape</keyword>
<keyword id="KW-0961">Cell wall biogenesis/degradation</keyword>
<keyword id="KW-0328">Glycosyltransferase</keyword>
<keyword id="KW-0472">Membrane</keyword>
<keyword id="KW-0573">Peptidoglycan synthesis</keyword>
<keyword id="KW-0808">Transferase</keyword>
<keyword id="KW-0812">Transmembrane</keyword>
<keyword id="KW-1133">Transmembrane helix</keyword>
<dbReference type="EC" id="2.4.99.28" evidence="1"/>
<dbReference type="EMBL" id="CP000950">
    <property type="protein sequence ID" value="ACA66838.1"/>
    <property type="molecule type" value="Genomic_DNA"/>
</dbReference>
<dbReference type="RefSeq" id="WP_012303494.1">
    <property type="nucleotide sequence ID" value="NZ_CP009792.1"/>
</dbReference>
<dbReference type="SMR" id="B1JL77"/>
<dbReference type="CAZy" id="GT51">
    <property type="family name" value="Glycosyltransferase Family 51"/>
</dbReference>
<dbReference type="KEGG" id="ypy:YPK_0535"/>
<dbReference type="PATRIC" id="fig|502800.11.peg.1147"/>
<dbReference type="UniPathway" id="UPA00219"/>
<dbReference type="GO" id="GO:0009274">
    <property type="term" value="C:peptidoglycan-based cell wall"/>
    <property type="evidence" value="ECO:0007669"/>
    <property type="project" value="InterPro"/>
</dbReference>
<dbReference type="GO" id="GO:0005886">
    <property type="term" value="C:plasma membrane"/>
    <property type="evidence" value="ECO:0007669"/>
    <property type="project" value="UniProtKB-SubCell"/>
</dbReference>
<dbReference type="GO" id="GO:0016763">
    <property type="term" value="F:pentosyltransferase activity"/>
    <property type="evidence" value="ECO:0007669"/>
    <property type="project" value="InterPro"/>
</dbReference>
<dbReference type="GO" id="GO:0008955">
    <property type="term" value="F:peptidoglycan glycosyltransferase activity"/>
    <property type="evidence" value="ECO:0007669"/>
    <property type="project" value="UniProtKB-UniRule"/>
</dbReference>
<dbReference type="GO" id="GO:0071555">
    <property type="term" value="P:cell wall organization"/>
    <property type="evidence" value="ECO:0007669"/>
    <property type="project" value="UniProtKB-KW"/>
</dbReference>
<dbReference type="GO" id="GO:0009252">
    <property type="term" value="P:peptidoglycan biosynthetic process"/>
    <property type="evidence" value="ECO:0007669"/>
    <property type="project" value="UniProtKB-UniRule"/>
</dbReference>
<dbReference type="GO" id="GO:0008360">
    <property type="term" value="P:regulation of cell shape"/>
    <property type="evidence" value="ECO:0007669"/>
    <property type="project" value="UniProtKB-KW"/>
</dbReference>
<dbReference type="Gene3D" id="1.10.3810.10">
    <property type="entry name" value="Biosynthetic peptidoglycan transglycosylase-like"/>
    <property type="match status" value="1"/>
</dbReference>
<dbReference type="HAMAP" id="MF_00766">
    <property type="entry name" value="PGT_MtgA"/>
    <property type="match status" value="1"/>
</dbReference>
<dbReference type="InterPro" id="IPR001264">
    <property type="entry name" value="Glyco_trans_51"/>
</dbReference>
<dbReference type="InterPro" id="IPR023346">
    <property type="entry name" value="Lysozyme-like_dom_sf"/>
</dbReference>
<dbReference type="InterPro" id="IPR036950">
    <property type="entry name" value="PBP_transglycosylase"/>
</dbReference>
<dbReference type="InterPro" id="IPR011812">
    <property type="entry name" value="Pep_trsgly"/>
</dbReference>
<dbReference type="NCBIfam" id="TIGR02070">
    <property type="entry name" value="mono_pep_trsgly"/>
    <property type="match status" value="1"/>
</dbReference>
<dbReference type="PANTHER" id="PTHR30400:SF0">
    <property type="entry name" value="BIOSYNTHETIC PEPTIDOGLYCAN TRANSGLYCOSYLASE"/>
    <property type="match status" value="1"/>
</dbReference>
<dbReference type="PANTHER" id="PTHR30400">
    <property type="entry name" value="MONOFUNCTIONAL BIOSYNTHETIC PEPTIDOGLYCAN TRANSGLYCOSYLASE"/>
    <property type="match status" value="1"/>
</dbReference>
<dbReference type="Pfam" id="PF00912">
    <property type="entry name" value="Transgly"/>
    <property type="match status" value="1"/>
</dbReference>
<dbReference type="SUPFAM" id="SSF53955">
    <property type="entry name" value="Lysozyme-like"/>
    <property type="match status" value="1"/>
</dbReference>
<organism>
    <name type="scientific">Yersinia pseudotuberculosis serotype O:3 (strain YPIII)</name>
    <dbReference type="NCBI Taxonomy" id="502800"/>
    <lineage>
        <taxon>Bacteria</taxon>
        <taxon>Pseudomonadati</taxon>
        <taxon>Pseudomonadota</taxon>
        <taxon>Gammaproteobacteria</taxon>
        <taxon>Enterobacterales</taxon>
        <taxon>Yersiniaceae</taxon>
        <taxon>Yersinia</taxon>
    </lineage>
</organism>
<name>MTGA_YERPY</name>
<accession>B1JL77</accession>
<comment type="function">
    <text evidence="1">Peptidoglycan polymerase that catalyzes glycan chain elongation from lipid-linked precursors.</text>
</comment>
<comment type="catalytic activity">
    <reaction evidence="1">
        <text>[GlcNAc-(1-&gt;4)-Mur2Ac(oyl-L-Ala-gamma-D-Glu-L-Lys-D-Ala-D-Ala)](n)-di-trans,octa-cis-undecaprenyl diphosphate + beta-D-GlcNAc-(1-&gt;4)-Mur2Ac(oyl-L-Ala-gamma-D-Glu-L-Lys-D-Ala-D-Ala)-di-trans,octa-cis-undecaprenyl diphosphate = [GlcNAc-(1-&gt;4)-Mur2Ac(oyl-L-Ala-gamma-D-Glu-L-Lys-D-Ala-D-Ala)](n+1)-di-trans,octa-cis-undecaprenyl diphosphate + di-trans,octa-cis-undecaprenyl diphosphate + H(+)</text>
        <dbReference type="Rhea" id="RHEA:23708"/>
        <dbReference type="Rhea" id="RHEA-COMP:9602"/>
        <dbReference type="Rhea" id="RHEA-COMP:9603"/>
        <dbReference type="ChEBI" id="CHEBI:15378"/>
        <dbReference type="ChEBI" id="CHEBI:58405"/>
        <dbReference type="ChEBI" id="CHEBI:60033"/>
        <dbReference type="ChEBI" id="CHEBI:78435"/>
        <dbReference type="EC" id="2.4.99.28"/>
    </reaction>
</comment>
<comment type="pathway">
    <text evidence="1">Cell wall biogenesis; peptidoglycan biosynthesis.</text>
</comment>
<comment type="subcellular location">
    <subcellularLocation>
        <location evidence="1">Cell inner membrane</location>
        <topology evidence="1">Single-pass membrane protein</topology>
    </subcellularLocation>
</comment>
<comment type="similarity">
    <text evidence="1">Belongs to the glycosyltransferase 51 family.</text>
</comment>
<protein>
    <recommendedName>
        <fullName evidence="1">Biosynthetic peptidoglycan transglycosylase</fullName>
        <ecNumber evidence="1">2.4.99.28</ecNumber>
    </recommendedName>
    <alternativeName>
        <fullName evidence="1">Glycan polymerase</fullName>
    </alternativeName>
    <alternativeName>
        <fullName evidence="1">Peptidoglycan glycosyltransferase MtgA</fullName>
        <shortName evidence="1">PGT</shortName>
    </alternativeName>
</protein>